<sequence length="421" mass="47341">MSSKSSLELANNAVKSNDIEKAIDLYKEVLNKGVSKDEKVANEQEQALTNLSDLYVRENRHNDLAQLVQQSRPLMANFSKAKSAKIVRTLIDKFSGEKKSLPLQIEVANDCIKWAIKEKRTFLRQALETKLISLYYDNSSYTDAINLINTLLSELKRMDDKMLLTEVHLLESKVYHAIRNIPKARASLTAAKTSANAVYCPPMLQGNLDLQSGILHADDMDFKTAYSYFYEAYEGFTSLDDDKKALSSLKYMLLSQIMLNSVSEVKSLLTGKHAIRYAGRDIEAMRAIAQAHENRSLADFEKALQDYKPELASDPIIRSHLSSLYDNLLEQNLLRVVEPFSRVEVSHIAELIGLSTVQVEGKLSQMILDKIFYGILDQGSGCLIVYDEPQQDKTYEAALEVIKNMGTVVDLLIENKASALL</sequence>
<organism>
    <name type="scientific">Schizosaccharomyces pombe (strain 972 / ATCC 24843)</name>
    <name type="common">Fission yeast</name>
    <dbReference type="NCBI Taxonomy" id="284812"/>
    <lineage>
        <taxon>Eukaryota</taxon>
        <taxon>Fungi</taxon>
        <taxon>Dikarya</taxon>
        <taxon>Ascomycota</taxon>
        <taxon>Taphrinomycotina</taxon>
        <taxon>Schizosaccharomycetes</taxon>
        <taxon>Schizosaccharomycetales</taxon>
        <taxon>Schizosaccharomycetaceae</taxon>
        <taxon>Schizosaccharomyces</taxon>
    </lineage>
</organism>
<dbReference type="EMBL" id="CU329670">
    <property type="protein sequence ID" value="CAB72236.1"/>
    <property type="molecule type" value="Genomic_DNA"/>
</dbReference>
<dbReference type="PIR" id="T50185">
    <property type="entry name" value="T50185"/>
</dbReference>
<dbReference type="RefSeq" id="NP_593111.1">
    <property type="nucleotide sequence ID" value="NM_001018508.2"/>
</dbReference>
<dbReference type="SMR" id="Q9P7S2"/>
<dbReference type="BioGRID" id="278298">
    <property type="interactions" value="16"/>
</dbReference>
<dbReference type="ComplexPortal" id="CPX-9077">
    <property type="entry name" value="26S proteasome complex"/>
</dbReference>
<dbReference type="FunCoup" id="Q9P7S2">
    <property type="interactions" value="667"/>
</dbReference>
<dbReference type="IntAct" id="Q9P7S2">
    <property type="interactions" value="1"/>
</dbReference>
<dbReference type="STRING" id="284812.Q9P7S2"/>
<dbReference type="iPTMnet" id="Q9P7S2"/>
<dbReference type="PaxDb" id="4896-SPAC23G3.11.1"/>
<dbReference type="EnsemblFungi" id="SPAC23G3.11.1">
    <property type="protein sequence ID" value="SPAC23G3.11.1:pep"/>
    <property type="gene ID" value="SPAC23G3.11"/>
</dbReference>
<dbReference type="GeneID" id="2541807"/>
<dbReference type="KEGG" id="spo:2541807"/>
<dbReference type="PomBase" id="SPAC23G3.11">
    <property type="gene designation" value="rpn6"/>
</dbReference>
<dbReference type="VEuPathDB" id="FungiDB:SPAC23G3.11"/>
<dbReference type="eggNOG" id="KOG1463">
    <property type="taxonomic scope" value="Eukaryota"/>
</dbReference>
<dbReference type="HOGENOM" id="CLU_029573_2_1_1"/>
<dbReference type="InParanoid" id="Q9P7S2"/>
<dbReference type="OMA" id="ESKIYHA"/>
<dbReference type="PhylomeDB" id="Q9P7S2"/>
<dbReference type="Reactome" id="R-SPO-1236978">
    <property type="pathway name" value="Cross-presentation of soluble exogenous antigens (endosomes)"/>
</dbReference>
<dbReference type="Reactome" id="R-SPO-350562">
    <property type="pathway name" value="Regulation of ornithine decarboxylase (ODC)"/>
</dbReference>
<dbReference type="Reactome" id="R-SPO-5687128">
    <property type="pathway name" value="MAPK6/MAPK4 signaling"/>
</dbReference>
<dbReference type="Reactome" id="R-SPO-5689603">
    <property type="pathway name" value="UCH proteinases"/>
</dbReference>
<dbReference type="Reactome" id="R-SPO-5689880">
    <property type="pathway name" value="Ub-specific processing proteases"/>
</dbReference>
<dbReference type="Reactome" id="R-SPO-6798695">
    <property type="pathway name" value="Neutrophil degranulation"/>
</dbReference>
<dbReference type="Reactome" id="R-SPO-68949">
    <property type="pathway name" value="Orc1 removal from chromatin"/>
</dbReference>
<dbReference type="Reactome" id="R-SPO-69017">
    <property type="pathway name" value="CDK-mediated phosphorylation and removal of Cdc6"/>
</dbReference>
<dbReference type="Reactome" id="R-SPO-69601">
    <property type="pathway name" value="Ubiquitin Mediated Degradation of Phosphorylated Cdc25A"/>
</dbReference>
<dbReference type="Reactome" id="R-SPO-75815">
    <property type="pathway name" value="Ubiquitin-dependent degradation of Cyclin D"/>
</dbReference>
<dbReference type="Reactome" id="R-SPO-8854050">
    <property type="pathway name" value="FBXL7 down-regulates AURKA during mitotic entry and in early mitosis"/>
</dbReference>
<dbReference type="Reactome" id="R-SPO-8948751">
    <property type="pathway name" value="Regulation of PTEN stability and activity"/>
</dbReference>
<dbReference type="Reactome" id="R-SPO-8951664">
    <property type="pathway name" value="Neddylation"/>
</dbReference>
<dbReference type="Reactome" id="R-SPO-9755511">
    <property type="pathway name" value="KEAP1-NFE2L2 pathway"/>
</dbReference>
<dbReference type="Reactome" id="R-SPO-983168">
    <property type="pathway name" value="Antigen processing: Ubiquitination &amp; Proteasome degradation"/>
</dbReference>
<dbReference type="Reactome" id="R-SPO-9907900">
    <property type="pathway name" value="Proteasome assembly"/>
</dbReference>
<dbReference type="PRO" id="PR:Q9P7S2"/>
<dbReference type="Proteomes" id="UP000002485">
    <property type="component" value="Chromosome I"/>
</dbReference>
<dbReference type="GO" id="GO:0005829">
    <property type="term" value="C:cytosol"/>
    <property type="evidence" value="ECO:0007005"/>
    <property type="project" value="PomBase"/>
</dbReference>
<dbReference type="GO" id="GO:0005634">
    <property type="term" value="C:nucleus"/>
    <property type="evidence" value="ECO:0007005"/>
    <property type="project" value="PomBase"/>
</dbReference>
<dbReference type="GO" id="GO:0008541">
    <property type="term" value="C:proteasome regulatory particle, lid subcomplex"/>
    <property type="evidence" value="ECO:0000314"/>
    <property type="project" value="PomBase"/>
</dbReference>
<dbReference type="GO" id="GO:0005198">
    <property type="term" value="F:structural molecule activity"/>
    <property type="evidence" value="ECO:0000318"/>
    <property type="project" value="GO_Central"/>
</dbReference>
<dbReference type="GO" id="GO:0043161">
    <property type="term" value="P:proteasome-mediated ubiquitin-dependent protein catabolic process"/>
    <property type="evidence" value="ECO:0000305"/>
    <property type="project" value="PomBase"/>
</dbReference>
<dbReference type="GO" id="GO:0006511">
    <property type="term" value="P:ubiquitin-dependent protein catabolic process"/>
    <property type="evidence" value="ECO:0000318"/>
    <property type="project" value="GO_Central"/>
</dbReference>
<dbReference type="FunFam" id="1.25.40.570:FF:000007">
    <property type="entry name" value="26S proteasome non-ATPase regulatory subunit 11"/>
    <property type="match status" value="1"/>
</dbReference>
<dbReference type="Gene3D" id="1.25.40.570">
    <property type="match status" value="1"/>
</dbReference>
<dbReference type="InterPro" id="IPR050871">
    <property type="entry name" value="26S_Proteasome/COP9_Components"/>
</dbReference>
<dbReference type="InterPro" id="IPR000717">
    <property type="entry name" value="PCI_dom"/>
</dbReference>
<dbReference type="InterPro" id="IPR040780">
    <property type="entry name" value="Rpn6_C_helix"/>
</dbReference>
<dbReference type="InterPro" id="IPR040773">
    <property type="entry name" value="Rpn6_N"/>
</dbReference>
<dbReference type="InterPro" id="IPR036390">
    <property type="entry name" value="WH_DNA-bd_sf"/>
</dbReference>
<dbReference type="PANTHER" id="PTHR10678">
    <property type="entry name" value="26S PROTEASOME NON-ATPASE REGULATORY SUBUNIT 11/COP9 SIGNALOSOME COMPLEX SUBUNIT 2"/>
    <property type="match status" value="1"/>
</dbReference>
<dbReference type="Pfam" id="PF01399">
    <property type="entry name" value="PCI"/>
    <property type="match status" value="1"/>
</dbReference>
<dbReference type="Pfam" id="PF18503">
    <property type="entry name" value="RPN6_C_helix"/>
    <property type="match status" value="1"/>
</dbReference>
<dbReference type="Pfam" id="PF18055">
    <property type="entry name" value="RPN6_N"/>
    <property type="match status" value="1"/>
</dbReference>
<dbReference type="SMART" id="SM00753">
    <property type="entry name" value="PAM"/>
    <property type="match status" value="1"/>
</dbReference>
<dbReference type="SMART" id="SM00088">
    <property type="entry name" value="PINT"/>
    <property type="match status" value="1"/>
</dbReference>
<dbReference type="SUPFAM" id="SSF46785">
    <property type="entry name" value="Winged helix' DNA-binding domain"/>
    <property type="match status" value="1"/>
</dbReference>
<dbReference type="PROSITE" id="PS50250">
    <property type="entry name" value="PCI"/>
    <property type="match status" value="1"/>
</dbReference>
<accession>Q9P7S2</accession>
<gene>
    <name type="primary">rpn6</name>
    <name type="ORF">SPAC23G3.11</name>
</gene>
<keyword id="KW-0647">Proteasome</keyword>
<keyword id="KW-1185">Reference proteome</keyword>
<reference key="1">
    <citation type="journal article" date="2002" name="Nature">
        <title>The genome sequence of Schizosaccharomyces pombe.</title>
        <authorList>
            <person name="Wood V."/>
            <person name="Gwilliam R."/>
            <person name="Rajandream M.A."/>
            <person name="Lyne M.H."/>
            <person name="Lyne R."/>
            <person name="Stewart A."/>
            <person name="Sgouros J.G."/>
            <person name="Peat N."/>
            <person name="Hayles J."/>
            <person name="Baker S.G."/>
            <person name="Basham D."/>
            <person name="Bowman S."/>
            <person name="Brooks K."/>
            <person name="Brown D."/>
            <person name="Brown S."/>
            <person name="Chillingworth T."/>
            <person name="Churcher C.M."/>
            <person name="Collins M."/>
            <person name="Connor R."/>
            <person name="Cronin A."/>
            <person name="Davis P."/>
            <person name="Feltwell T."/>
            <person name="Fraser A."/>
            <person name="Gentles S."/>
            <person name="Goble A."/>
            <person name="Hamlin N."/>
            <person name="Harris D.E."/>
            <person name="Hidalgo J."/>
            <person name="Hodgson G."/>
            <person name="Holroyd S."/>
            <person name="Hornsby T."/>
            <person name="Howarth S."/>
            <person name="Huckle E.J."/>
            <person name="Hunt S."/>
            <person name="Jagels K."/>
            <person name="James K.D."/>
            <person name="Jones L."/>
            <person name="Jones M."/>
            <person name="Leather S."/>
            <person name="McDonald S."/>
            <person name="McLean J."/>
            <person name="Mooney P."/>
            <person name="Moule S."/>
            <person name="Mungall K.L."/>
            <person name="Murphy L.D."/>
            <person name="Niblett D."/>
            <person name="Odell C."/>
            <person name="Oliver K."/>
            <person name="O'Neil S."/>
            <person name="Pearson D."/>
            <person name="Quail M.A."/>
            <person name="Rabbinowitsch E."/>
            <person name="Rutherford K.M."/>
            <person name="Rutter S."/>
            <person name="Saunders D."/>
            <person name="Seeger K."/>
            <person name="Sharp S."/>
            <person name="Skelton J."/>
            <person name="Simmonds M.N."/>
            <person name="Squares R."/>
            <person name="Squares S."/>
            <person name="Stevens K."/>
            <person name="Taylor K."/>
            <person name="Taylor R.G."/>
            <person name="Tivey A."/>
            <person name="Walsh S.V."/>
            <person name="Warren T."/>
            <person name="Whitehead S."/>
            <person name="Woodward J.R."/>
            <person name="Volckaert G."/>
            <person name="Aert R."/>
            <person name="Robben J."/>
            <person name="Grymonprez B."/>
            <person name="Weltjens I."/>
            <person name="Vanstreels E."/>
            <person name="Rieger M."/>
            <person name="Schaefer M."/>
            <person name="Mueller-Auer S."/>
            <person name="Gabel C."/>
            <person name="Fuchs M."/>
            <person name="Duesterhoeft A."/>
            <person name="Fritzc C."/>
            <person name="Holzer E."/>
            <person name="Moestl D."/>
            <person name="Hilbert H."/>
            <person name="Borzym K."/>
            <person name="Langer I."/>
            <person name="Beck A."/>
            <person name="Lehrach H."/>
            <person name="Reinhardt R."/>
            <person name="Pohl T.M."/>
            <person name="Eger P."/>
            <person name="Zimmermann W."/>
            <person name="Wedler H."/>
            <person name="Wambutt R."/>
            <person name="Purnelle B."/>
            <person name="Goffeau A."/>
            <person name="Cadieu E."/>
            <person name="Dreano S."/>
            <person name="Gloux S."/>
            <person name="Lelaure V."/>
            <person name="Mottier S."/>
            <person name="Galibert F."/>
            <person name="Aves S.J."/>
            <person name="Xiang Z."/>
            <person name="Hunt C."/>
            <person name="Moore K."/>
            <person name="Hurst S.M."/>
            <person name="Lucas M."/>
            <person name="Rochet M."/>
            <person name="Gaillardin C."/>
            <person name="Tallada V.A."/>
            <person name="Garzon A."/>
            <person name="Thode G."/>
            <person name="Daga R.R."/>
            <person name="Cruzado L."/>
            <person name="Jimenez J."/>
            <person name="Sanchez M."/>
            <person name="del Rey F."/>
            <person name="Benito J."/>
            <person name="Dominguez A."/>
            <person name="Revuelta J.L."/>
            <person name="Moreno S."/>
            <person name="Armstrong J."/>
            <person name="Forsburg S.L."/>
            <person name="Cerutti L."/>
            <person name="Lowe T."/>
            <person name="McCombie W.R."/>
            <person name="Paulsen I."/>
            <person name="Potashkin J."/>
            <person name="Shpakovski G.V."/>
            <person name="Ussery D."/>
            <person name="Barrell B.G."/>
            <person name="Nurse P."/>
        </authorList>
    </citation>
    <scope>NUCLEOTIDE SEQUENCE [LARGE SCALE GENOMIC DNA]</scope>
    <source>
        <strain>972 / ATCC 24843</strain>
    </source>
</reference>
<proteinExistence type="inferred from homology"/>
<protein>
    <recommendedName>
        <fullName>Probable 26S proteasome regulatory subunit rpn6</fullName>
    </recommendedName>
</protein>
<feature type="chain" id="PRO_0000173859" description="Probable 26S proteasome regulatory subunit rpn6">
    <location>
        <begin position="1"/>
        <end position="421"/>
    </location>
</feature>
<feature type="domain" description="PCI" evidence="2">
    <location>
        <begin position="221"/>
        <end position="390"/>
    </location>
</feature>
<comment type="function">
    <text evidence="1">Component of the lid subcomplex of the 26S proteasome, a multiprotein complex involved in the ATP-dependent degradation of ubiquitinated proteins. In the complex, rpn6 is required for proteasome assembly (By similarity).</text>
</comment>
<comment type="subunit">
    <text evidence="1">Component of the lid subcomplex of the 19S proteasome regulatory particle complex (also named PA700 complex). The 26S proteasome consists of a 20S proteasome core and two 19S regulatory subunits (By similarity).</text>
</comment>
<comment type="similarity">
    <text evidence="3">Belongs to the proteasome subunit S9 family.</text>
</comment>
<evidence type="ECO:0000250" key="1"/>
<evidence type="ECO:0000255" key="2">
    <source>
        <dbReference type="PROSITE-ProRule" id="PRU01185"/>
    </source>
</evidence>
<evidence type="ECO:0000305" key="3"/>
<name>RPN6_SCHPO</name>